<organism>
    <name type="scientific">Yersinia pseudotuberculosis serotype I (strain IP32953)</name>
    <dbReference type="NCBI Taxonomy" id="273123"/>
    <lineage>
        <taxon>Bacteria</taxon>
        <taxon>Pseudomonadati</taxon>
        <taxon>Pseudomonadota</taxon>
        <taxon>Gammaproteobacteria</taxon>
        <taxon>Enterobacterales</taxon>
        <taxon>Yersiniaceae</taxon>
        <taxon>Yersinia</taxon>
    </lineage>
</organism>
<dbReference type="EC" id="6.5.1.2" evidence="1"/>
<dbReference type="EMBL" id="BX936398">
    <property type="protein sequence ID" value="CAH19278.1"/>
    <property type="molecule type" value="Genomic_DNA"/>
</dbReference>
<dbReference type="RefSeq" id="WP_011191447.1">
    <property type="nucleotide sequence ID" value="NC_006155.1"/>
</dbReference>
<dbReference type="SMR" id="Q66GE4"/>
<dbReference type="KEGG" id="ypo:BZ17_2557"/>
<dbReference type="KEGG" id="yps:YPTB0038"/>
<dbReference type="PATRIC" id="fig|273123.14.peg.2682"/>
<dbReference type="Proteomes" id="UP000001011">
    <property type="component" value="Chromosome"/>
</dbReference>
<dbReference type="GO" id="GO:0003911">
    <property type="term" value="F:DNA ligase (NAD+) activity"/>
    <property type="evidence" value="ECO:0007669"/>
    <property type="project" value="UniProtKB-UniRule"/>
</dbReference>
<dbReference type="GO" id="GO:0006281">
    <property type="term" value="P:DNA repair"/>
    <property type="evidence" value="ECO:0007669"/>
    <property type="project" value="UniProtKB-KW"/>
</dbReference>
<dbReference type="GO" id="GO:0006260">
    <property type="term" value="P:DNA replication"/>
    <property type="evidence" value="ECO:0007669"/>
    <property type="project" value="UniProtKB-KW"/>
</dbReference>
<dbReference type="CDD" id="cd00114">
    <property type="entry name" value="LIGANc"/>
    <property type="match status" value="1"/>
</dbReference>
<dbReference type="FunFam" id="2.40.50.140:FF:000139">
    <property type="entry name" value="DNA ligase B"/>
    <property type="match status" value="1"/>
</dbReference>
<dbReference type="FunFam" id="3.30.470.30:FF:000007">
    <property type="entry name" value="DNA ligase B"/>
    <property type="match status" value="1"/>
</dbReference>
<dbReference type="Gene3D" id="1.10.150.20">
    <property type="entry name" value="5' to 3' exonuclease, C-terminal subdomain"/>
    <property type="match status" value="1"/>
</dbReference>
<dbReference type="Gene3D" id="3.30.470.30">
    <property type="entry name" value="DNA ligase/mRNA capping enzyme"/>
    <property type="match status" value="1"/>
</dbReference>
<dbReference type="Gene3D" id="1.10.287.610">
    <property type="entry name" value="Helix hairpin bin"/>
    <property type="match status" value="1"/>
</dbReference>
<dbReference type="Gene3D" id="2.40.50.140">
    <property type="entry name" value="Nucleic acid-binding proteins"/>
    <property type="match status" value="1"/>
</dbReference>
<dbReference type="HAMAP" id="MF_01587">
    <property type="entry name" value="DNA_ligase_B"/>
    <property type="match status" value="1"/>
</dbReference>
<dbReference type="InterPro" id="IPR020923">
    <property type="entry name" value="DNA_ligase_B"/>
</dbReference>
<dbReference type="InterPro" id="IPR013839">
    <property type="entry name" value="DNAligase_adenylation"/>
</dbReference>
<dbReference type="InterPro" id="IPR013840">
    <property type="entry name" value="DNAligase_N"/>
</dbReference>
<dbReference type="InterPro" id="IPR012340">
    <property type="entry name" value="NA-bd_OB-fold"/>
</dbReference>
<dbReference type="InterPro" id="IPR050326">
    <property type="entry name" value="NAD_dep_DNA_ligaseB"/>
</dbReference>
<dbReference type="InterPro" id="IPR004150">
    <property type="entry name" value="NAD_DNA_ligase_OB"/>
</dbReference>
<dbReference type="InterPro" id="IPR010994">
    <property type="entry name" value="RuvA_2-like"/>
</dbReference>
<dbReference type="NCBIfam" id="NF005987">
    <property type="entry name" value="PRK08097.1"/>
    <property type="match status" value="1"/>
</dbReference>
<dbReference type="PANTHER" id="PTHR47810">
    <property type="entry name" value="DNA LIGASE"/>
    <property type="match status" value="1"/>
</dbReference>
<dbReference type="PANTHER" id="PTHR47810:SF1">
    <property type="entry name" value="DNA LIGASE B"/>
    <property type="match status" value="1"/>
</dbReference>
<dbReference type="Pfam" id="PF01653">
    <property type="entry name" value="DNA_ligase_aden"/>
    <property type="match status" value="1"/>
</dbReference>
<dbReference type="Pfam" id="PF03120">
    <property type="entry name" value="DNA_ligase_OB"/>
    <property type="match status" value="1"/>
</dbReference>
<dbReference type="SMART" id="SM00532">
    <property type="entry name" value="LIGANc"/>
    <property type="match status" value="1"/>
</dbReference>
<dbReference type="SUPFAM" id="SSF56091">
    <property type="entry name" value="DNA ligase/mRNA capping enzyme, catalytic domain"/>
    <property type="match status" value="1"/>
</dbReference>
<dbReference type="SUPFAM" id="SSF50249">
    <property type="entry name" value="Nucleic acid-binding proteins"/>
    <property type="match status" value="1"/>
</dbReference>
<dbReference type="SUPFAM" id="SSF47781">
    <property type="entry name" value="RuvA domain 2-like"/>
    <property type="match status" value="1"/>
</dbReference>
<reference key="1">
    <citation type="journal article" date="2004" name="Proc. Natl. Acad. Sci. U.S.A.">
        <title>Insights into the evolution of Yersinia pestis through whole-genome comparison with Yersinia pseudotuberculosis.</title>
        <authorList>
            <person name="Chain P.S.G."/>
            <person name="Carniel E."/>
            <person name="Larimer F.W."/>
            <person name="Lamerdin J."/>
            <person name="Stoutland P.O."/>
            <person name="Regala W.M."/>
            <person name="Georgescu A.M."/>
            <person name="Vergez L.M."/>
            <person name="Land M.L."/>
            <person name="Motin V.L."/>
            <person name="Brubaker R.R."/>
            <person name="Fowler J."/>
            <person name="Hinnebusch J."/>
            <person name="Marceau M."/>
            <person name="Medigue C."/>
            <person name="Simonet M."/>
            <person name="Chenal-Francisque V."/>
            <person name="Souza B."/>
            <person name="Dacheux D."/>
            <person name="Elliott J.M."/>
            <person name="Derbise A."/>
            <person name="Hauser L.J."/>
            <person name="Garcia E."/>
        </authorList>
    </citation>
    <scope>NUCLEOTIDE SEQUENCE [LARGE SCALE GENOMIC DNA]</scope>
    <source>
        <strain>IP32953</strain>
    </source>
</reference>
<keyword id="KW-0227">DNA damage</keyword>
<keyword id="KW-0234">DNA repair</keyword>
<keyword id="KW-0235">DNA replication</keyword>
<keyword id="KW-0436">Ligase</keyword>
<keyword id="KW-0520">NAD</keyword>
<name>LIGB_YERPS</name>
<proteinExistence type="inferred from homology"/>
<evidence type="ECO:0000255" key="1">
    <source>
        <dbReference type="HAMAP-Rule" id="MF_01587"/>
    </source>
</evidence>
<feature type="chain" id="PRO_0000313562" description="DNA ligase B">
    <location>
        <begin position="1"/>
        <end position="567"/>
    </location>
</feature>
<feature type="active site" description="N6-AMP-lysine intermediate" evidence="1">
    <location>
        <position position="132"/>
    </location>
</feature>
<gene>
    <name evidence="1" type="primary">ligB</name>
    <name type="ordered locus">YPTB0038</name>
</gene>
<accession>Q66GE4</accession>
<sequence length="567" mass="63623">MNILNLKIIMFLLISNIIVVGGAWATSTCPDWPATRIAVEINALEQQLNKWSAAYHQQGHSPVTDDIYDQLQDKLRVWQSCRGLPDKTESQPIPGKGQFLHPVAHTGLKKLKDETALTRWMAGRKNLWVQPKVDGVAVTLVYHGGKLVQLLSRGNGVKGQNWTEKAPFISAIPQYIANAPALLTLQGELFLLMDGHQQAKSGGVNARSTVAGALMRKSPSPLLAQVGVFIWAWPDGPTTMKEKVALLQVMGFPFTAKYSEPVMSHLDVVQWRQFWFQAPLPFVTDGVVVRQEEEPAGRYWQATPGQWSMAWKYPPLQHIAEVKDIHFTLGRTGKGTVVLEVLPIKIDDKWIRRVNIGSVTRWKQWDIAPGDHITLALAGHGIPRLDNVVWRVHQRNTITAPNWDKFHQLSCFQRLPHGCEPQFLSRLIWLSGPGGLDIGGIGGGFWQKLIHHELINDLVGWLLLTPEQIASIPGIGNARAEKIYQQFQRAKQQPFSRWLLALGFPQVVSVDAQWQVVLRRSLSEWATMAGIGQMRAKQIKHFLDHPDVQALADFLSTQKVVGFELTE</sequence>
<comment type="function">
    <text evidence="1">Catalyzes the formation of phosphodiester linkages between 5'-phosphoryl and 3'-hydroxyl groups in double-stranded DNA using NAD as a coenzyme and as the energy source for the reaction.</text>
</comment>
<comment type="catalytic activity">
    <reaction evidence="1">
        <text>NAD(+) + (deoxyribonucleotide)n-3'-hydroxyl + 5'-phospho-(deoxyribonucleotide)m = (deoxyribonucleotide)n+m + AMP + beta-nicotinamide D-nucleotide.</text>
        <dbReference type="EC" id="6.5.1.2"/>
    </reaction>
</comment>
<comment type="similarity">
    <text evidence="1">Belongs to the NAD-dependent DNA ligase family. LigB subfamily.</text>
</comment>
<protein>
    <recommendedName>
        <fullName evidence="1">DNA ligase B</fullName>
        <ecNumber evidence="1">6.5.1.2</ecNumber>
    </recommendedName>
    <alternativeName>
        <fullName evidence="1">Polydeoxyribonucleotide synthase [NAD(+)] B</fullName>
    </alternativeName>
</protein>